<gene>
    <name evidence="1" type="primary">trmA</name>
    <name type="ordered locus">VF_2436</name>
</gene>
<name>TRMA_ALIF1</name>
<proteinExistence type="inferred from homology"/>
<reference key="1">
    <citation type="journal article" date="2005" name="Proc. Natl. Acad. Sci. U.S.A.">
        <title>Complete genome sequence of Vibrio fischeri: a symbiotic bacterium with pathogenic congeners.</title>
        <authorList>
            <person name="Ruby E.G."/>
            <person name="Urbanowski M."/>
            <person name="Campbell J."/>
            <person name="Dunn A."/>
            <person name="Faini M."/>
            <person name="Gunsalus R."/>
            <person name="Lostroh P."/>
            <person name="Lupp C."/>
            <person name="McCann J."/>
            <person name="Millikan D."/>
            <person name="Schaefer A."/>
            <person name="Stabb E."/>
            <person name="Stevens A."/>
            <person name="Visick K."/>
            <person name="Whistler C."/>
            <person name="Greenberg E.P."/>
        </authorList>
    </citation>
    <scope>NUCLEOTIDE SEQUENCE [LARGE SCALE GENOMIC DNA]</scope>
    <source>
        <strain>ATCC 700601 / ES114</strain>
    </source>
</reference>
<feature type="chain" id="PRO_0000281471" description="tRNA/tmRNA (uracil-C(5))-methyltransferase">
    <location>
        <begin position="1"/>
        <end position="368"/>
    </location>
</feature>
<feature type="active site" description="Nucleophile" evidence="1">
    <location>
        <position position="326"/>
    </location>
</feature>
<feature type="active site" description="Proton acceptor" evidence="1">
    <location>
        <position position="360"/>
    </location>
</feature>
<feature type="binding site" evidence="1">
    <location>
        <position position="190"/>
    </location>
    <ligand>
        <name>S-adenosyl-L-methionine</name>
        <dbReference type="ChEBI" id="CHEBI:59789"/>
    </ligand>
</feature>
<feature type="binding site" evidence="1">
    <location>
        <position position="218"/>
    </location>
    <ligand>
        <name>S-adenosyl-L-methionine</name>
        <dbReference type="ChEBI" id="CHEBI:59789"/>
    </ligand>
</feature>
<feature type="binding site" evidence="1">
    <location>
        <position position="223"/>
    </location>
    <ligand>
        <name>S-adenosyl-L-methionine</name>
        <dbReference type="ChEBI" id="CHEBI:59789"/>
    </ligand>
</feature>
<feature type="binding site" evidence="1">
    <location>
        <position position="239"/>
    </location>
    <ligand>
        <name>S-adenosyl-L-methionine</name>
        <dbReference type="ChEBI" id="CHEBI:59789"/>
    </ligand>
</feature>
<feature type="binding site" evidence="1">
    <location>
        <position position="301"/>
    </location>
    <ligand>
        <name>S-adenosyl-L-methionine</name>
        <dbReference type="ChEBI" id="CHEBI:59789"/>
    </ligand>
</feature>
<organism>
    <name type="scientific">Aliivibrio fischeri (strain ATCC 700601 / ES114)</name>
    <name type="common">Vibrio fischeri</name>
    <dbReference type="NCBI Taxonomy" id="312309"/>
    <lineage>
        <taxon>Bacteria</taxon>
        <taxon>Pseudomonadati</taxon>
        <taxon>Pseudomonadota</taxon>
        <taxon>Gammaproteobacteria</taxon>
        <taxon>Vibrionales</taxon>
        <taxon>Vibrionaceae</taxon>
        <taxon>Aliivibrio</taxon>
    </lineage>
</organism>
<comment type="function">
    <text evidence="1">Dual-specificity methyltransferase that catalyzes the formation of 5-methyluridine at position 54 (m5U54) in all tRNAs, and that of position 341 (m5U341) in tmRNA (transfer-mRNA).</text>
</comment>
<comment type="catalytic activity">
    <reaction evidence="1">
        <text>uridine(54) in tRNA + S-adenosyl-L-methionine = 5-methyluridine(54) in tRNA + S-adenosyl-L-homocysteine + H(+)</text>
        <dbReference type="Rhea" id="RHEA:42712"/>
        <dbReference type="Rhea" id="RHEA-COMP:10167"/>
        <dbReference type="Rhea" id="RHEA-COMP:10193"/>
        <dbReference type="ChEBI" id="CHEBI:15378"/>
        <dbReference type="ChEBI" id="CHEBI:57856"/>
        <dbReference type="ChEBI" id="CHEBI:59789"/>
        <dbReference type="ChEBI" id="CHEBI:65315"/>
        <dbReference type="ChEBI" id="CHEBI:74447"/>
        <dbReference type="EC" id="2.1.1.35"/>
    </reaction>
</comment>
<comment type="catalytic activity">
    <reaction evidence="1">
        <text>uridine(341) in tmRNA + S-adenosyl-L-methionine = 5-methyluridine(341) in tmRNA + S-adenosyl-L-homocysteine + H(+)</text>
        <dbReference type="Rhea" id="RHEA:43612"/>
        <dbReference type="Rhea" id="RHEA-COMP:10630"/>
        <dbReference type="Rhea" id="RHEA-COMP:10631"/>
        <dbReference type="ChEBI" id="CHEBI:15378"/>
        <dbReference type="ChEBI" id="CHEBI:57856"/>
        <dbReference type="ChEBI" id="CHEBI:59789"/>
        <dbReference type="ChEBI" id="CHEBI:65315"/>
        <dbReference type="ChEBI" id="CHEBI:74447"/>
    </reaction>
</comment>
<comment type="similarity">
    <text evidence="1">Belongs to the class I-like SAM-binding methyltransferase superfamily. RNA M5U methyltransferase family. TrmA subfamily.</text>
</comment>
<evidence type="ECO:0000255" key="1">
    <source>
        <dbReference type="HAMAP-Rule" id="MF_01011"/>
    </source>
</evidence>
<sequence length="368" mass="42807">MTQSVMNPENYQVQLDEKAEALSAMFSEFNVPELEVFSSPAENYRMRAEFRVWHEGDEMYYVMFNQETKEKYRVDYFLPASRLINDLMPLLTEAVKESKTLRYKMFQVDFLSTLSGEILVSMLYHRQLDDAWKEEAKALKQRLNDEGFNLNIIGRARKMKIVLDQEFVIEKLKVNDDILTYKQVENSFTQPNGIVAQKMLEWAVDCTQNSQGDLLELYCGNGNFSLALAKNFDRVLATELAKPSVDSAQYNIAANNIDNVQIIRMSAEDFTDAMEGKREFRRLKDQNIDLKSYNCNTIFVDPPRSGMDEGTCKMVQGYERIMYISCNPETLKENLEILSQTHNITRFALFDQFPYTHHMEAGVFLERK</sequence>
<dbReference type="EC" id="2.1.1.-" evidence="1"/>
<dbReference type="EC" id="2.1.1.35" evidence="1"/>
<dbReference type="EMBL" id="CP000020">
    <property type="protein sequence ID" value="AAW86931.1"/>
    <property type="molecule type" value="Genomic_DNA"/>
</dbReference>
<dbReference type="RefSeq" id="WP_005421342.1">
    <property type="nucleotide sequence ID" value="NZ_CAWLES010000001.1"/>
</dbReference>
<dbReference type="RefSeq" id="YP_205819.1">
    <property type="nucleotide sequence ID" value="NC_006840.2"/>
</dbReference>
<dbReference type="SMR" id="Q5E215"/>
<dbReference type="STRING" id="312309.VF_2436"/>
<dbReference type="EnsemblBacteria" id="AAW86931">
    <property type="protein sequence ID" value="AAW86931"/>
    <property type="gene ID" value="VF_2436"/>
</dbReference>
<dbReference type="GeneID" id="54165167"/>
<dbReference type="KEGG" id="vfi:VF_2436"/>
<dbReference type="PATRIC" id="fig|312309.11.peg.2464"/>
<dbReference type="eggNOG" id="COG2265">
    <property type="taxonomic scope" value="Bacteria"/>
</dbReference>
<dbReference type="HOGENOM" id="CLU_043022_0_0_6"/>
<dbReference type="OrthoDB" id="9804590at2"/>
<dbReference type="Proteomes" id="UP000000537">
    <property type="component" value="Chromosome I"/>
</dbReference>
<dbReference type="GO" id="GO:0005829">
    <property type="term" value="C:cytosol"/>
    <property type="evidence" value="ECO:0007669"/>
    <property type="project" value="TreeGrafter"/>
</dbReference>
<dbReference type="GO" id="GO:0019843">
    <property type="term" value="F:rRNA binding"/>
    <property type="evidence" value="ECO:0007669"/>
    <property type="project" value="TreeGrafter"/>
</dbReference>
<dbReference type="GO" id="GO:0030697">
    <property type="term" value="F:tRNA (uracil(54)-C5)-methyltransferase activity, S-adenosyl methionine-dependent"/>
    <property type="evidence" value="ECO:0007669"/>
    <property type="project" value="UniProtKB-UniRule"/>
</dbReference>
<dbReference type="GO" id="GO:0000049">
    <property type="term" value="F:tRNA binding"/>
    <property type="evidence" value="ECO:0007669"/>
    <property type="project" value="TreeGrafter"/>
</dbReference>
<dbReference type="GO" id="GO:0030488">
    <property type="term" value="P:tRNA methylation"/>
    <property type="evidence" value="ECO:0007669"/>
    <property type="project" value="UniProtKB-UniRule"/>
</dbReference>
<dbReference type="CDD" id="cd02440">
    <property type="entry name" value="AdoMet_MTases"/>
    <property type="match status" value="1"/>
</dbReference>
<dbReference type="FunFam" id="2.40.50.1070:FF:000001">
    <property type="entry name" value="tRNA/tmRNA (uracil-C(5))-methyltransferase"/>
    <property type="match status" value="1"/>
</dbReference>
<dbReference type="FunFam" id="3.40.50.150:FF:000012">
    <property type="entry name" value="tRNA/tmRNA (uracil-C(5))-methyltransferase"/>
    <property type="match status" value="1"/>
</dbReference>
<dbReference type="Gene3D" id="2.40.50.1070">
    <property type="match status" value="1"/>
</dbReference>
<dbReference type="Gene3D" id="3.40.50.150">
    <property type="entry name" value="Vaccinia Virus protein VP39"/>
    <property type="match status" value="1"/>
</dbReference>
<dbReference type="HAMAP" id="MF_01011">
    <property type="entry name" value="RNA_methyltr_TrmA"/>
    <property type="match status" value="1"/>
</dbReference>
<dbReference type="InterPro" id="IPR030390">
    <property type="entry name" value="MeTrfase_TrmA_AS"/>
</dbReference>
<dbReference type="InterPro" id="IPR030391">
    <property type="entry name" value="MeTrfase_TrmA_CS"/>
</dbReference>
<dbReference type="InterPro" id="IPR029063">
    <property type="entry name" value="SAM-dependent_MTases_sf"/>
</dbReference>
<dbReference type="InterPro" id="IPR011869">
    <property type="entry name" value="TrmA_MeTrfase"/>
</dbReference>
<dbReference type="InterPro" id="IPR010280">
    <property type="entry name" value="U5_MeTrfase_fam"/>
</dbReference>
<dbReference type="NCBIfam" id="TIGR02143">
    <property type="entry name" value="trmA_only"/>
    <property type="match status" value="1"/>
</dbReference>
<dbReference type="PANTHER" id="PTHR47790">
    <property type="entry name" value="TRNA/TMRNA (URACIL-C(5))-METHYLTRANSFERASE"/>
    <property type="match status" value="1"/>
</dbReference>
<dbReference type="PANTHER" id="PTHR47790:SF2">
    <property type="entry name" value="TRNA_TMRNA (URACIL-C(5))-METHYLTRANSFERASE"/>
    <property type="match status" value="1"/>
</dbReference>
<dbReference type="Pfam" id="PF05958">
    <property type="entry name" value="tRNA_U5-meth_tr"/>
    <property type="match status" value="1"/>
</dbReference>
<dbReference type="SUPFAM" id="SSF53335">
    <property type="entry name" value="S-adenosyl-L-methionine-dependent methyltransferases"/>
    <property type="match status" value="1"/>
</dbReference>
<dbReference type="PROSITE" id="PS51687">
    <property type="entry name" value="SAM_MT_RNA_M5U"/>
    <property type="match status" value="1"/>
</dbReference>
<dbReference type="PROSITE" id="PS01230">
    <property type="entry name" value="TRMA_1"/>
    <property type="match status" value="1"/>
</dbReference>
<dbReference type="PROSITE" id="PS01231">
    <property type="entry name" value="TRMA_2"/>
    <property type="match status" value="1"/>
</dbReference>
<accession>Q5E215</accession>
<keyword id="KW-0489">Methyltransferase</keyword>
<keyword id="KW-1185">Reference proteome</keyword>
<keyword id="KW-0949">S-adenosyl-L-methionine</keyword>
<keyword id="KW-0808">Transferase</keyword>
<keyword id="KW-0819">tRNA processing</keyword>
<protein>
    <recommendedName>
        <fullName evidence="1">tRNA/tmRNA (uracil-C(5))-methyltransferase</fullName>
        <ecNumber evidence="1">2.1.1.-</ecNumber>
        <ecNumber evidence="1">2.1.1.35</ecNumber>
    </recommendedName>
    <alternativeName>
        <fullName evidence="1">tRNA (uracil(54)-C(5))-methyltransferase</fullName>
    </alternativeName>
    <alternativeName>
        <fullName evidence="1">tRNA(m5U54)-methyltransferase</fullName>
        <shortName evidence="1">RUMT</shortName>
    </alternativeName>
    <alternativeName>
        <fullName evidence="1">tmRNA (uracil(341)-C(5))-methyltransferase</fullName>
    </alternativeName>
</protein>